<proteinExistence type="evidence at protein level"/>
<keyword id="KW-0002">3D-structure</keyword>
<keyword id="KW-0024">Alternative initiation</keyword>
<keyword id="KW-0068">Autocatalytic cleavage</keyword>
<keyword id="KW-0378">Hydrolase</keyword>
<keyword id="KW-0645">Protease</keyword>
<keyword id="KW-1185">Reference proteome</keyword>
<keyword id="KW-0720">Serine protease</keyword>
<keyword id="KW-0118">Viral capsid assembly</keyword>
<keyword id="KW-1273">Viral capsid maturation</keyword>
<keyword id="KW-1188">Viral release from host cell</keyword>
<dbReference type="EC" id="3.4.21.-" evidence="1"/>
<dbReference type="EMBL" id="M15359">
    <property type="protein sequence ID" value="AAA32501.1"/>
    <property type="molecule type" value="Genomic_DNA"/>
</dbReference>
<dbReference type="EMBL" id="AF158101">
    <property type="protein sequence ID" value="AAD42426.1"/>
    <property type="molecule type" value="Genomic_DNA"/>
</dbReference>
<dbReference type="EMBL" id="J02512">
    <property type="protein sequence ID" value="AAA32522.1"/>
    <property type="molecule type" value="Genomic_DNA"/>
</dbReference>
<dbReference type="EMBL" id="X01414">
    <property type="protein sequence ID" value="CAA25657.1"/>
    <property type="molecule type" value="Genomic_DNA"/>
</dbReference>
<dbReference type="PIR" id="JF0025">
    <property type="entry name" value="GPBPT4"/>
</dbReference>
<dbReference type="RefSeq" id="NP_049785.1">
    <property type="nucleotide sequence ID" value="NC_000866.4"/>
</dbReference>
<dbReference type="PDB" id="5JBL">
    <property type="method" value="X-ray"/>
    <property type="resolution" value="1.94 A"/>
    <property type="chains" value="A/B/C/D/E=1-212"/>
</dbReference>
<dbReference type="PDBsum" id="5JBL"/>
<dbReference type="SMR" id="P06807"/>
<dbReference type="MEROPS" id="S77.001"/>
<dbReference type="GeneID" id="1258771"/>
<dbReference type="KEGG" id="vg:1258771"/>
<dbReference type="OrthoDB" id="11000at10239"/>
<dbReference type="Proteomes" id="UP000009087">
    <property type="component" value="Segment"/>
</dbReference>
<dbReference type="GO" id="GO:0008236">
    <property type="term" value="F:serine-type peptidase activity"/>
    <property type="evidence" value="ECO:0007669"/>
    <property type="project" value="UniProtKB-KW"/>
</dbReference>
<dbReference type="GO" id="GO:0006508">
    <property type="term" value="P:proteolysis"/>
    <property type="evidence" value="ECO:0007669"/>
    <property type="project" value="UniProtKB-KW"/>
</dbReference>
<dbReference type="GO" id="GO:0046797">
    <property type="term" value="P:viral procapsid maturation"/>
    <property type="evidence" value="ECO:0007669"/>
    <property type="project" value="UniProtKB-KW"/>
</dbReference>
<dbReference type="InterPro" id="IPR005082">
    <property type="entry name" value="Peptidase_U9_T4_prohead"/>
</dbReference>
<dbReference type="Pfam" id="PF03420">
    <property type="entry name" value="Peptidase_S77"/>
    <property type="match status" value="1"/>
</dbReference>
<organismHost>
    <name type="scientific">Escherichia coli</name>
    <dbReference type="NCBI Taxonomy" id="562"/>
</organismHost>
<reference key="1">
    <citation type="journal article" date="1986" name="Gene">
        <title>The nucleotide sequence of gene 21 of bacteriophage T4 coding for the prohead protease.</title>
        <authorList>
            <person name="Keller B."/>
            <person name="Bickle T.A."/>
        </authorList>
    </citation>
    <scope>NUCLEOTIDE SEQUENCE [GENOMIC DNA]</scope>
</reference>
<reference key="2">
    <citation type="journal article" date="2003" name="Microbiol. Mol. Biol. Rev.">
        <title>Bacteriophage T4 genome.</title>
        <authorList>
            <person name="Miller E.S."/>
            <person name="Kutter E."/>
            <person name="Mosig G."/>
            <person name="Arisaka F."/>
            <person name="Kunisawa T."/>
            <person name="Ruger W."/>
        </authorList>
    </citation>
    <scope>NUCLEOTIDE SEQUENCE [LARGE SCALE GENOMIC DNA]</scope>
</reference>
<reference key="3">
    <citation type="journal article" date="1984" name="J. Mol. Biol.">
        <title>Gene 68, a new bacteriophage T4 gene which codes for the 17K prohead core protein is involved in head size determination.</title>
        <authorList>
            <person name="Keller B."/>
            <person name="Sengstag C."/>
            <person name="Kellenberger E."/>
            <person name="Bickle T.A."/>
        </authorList>
    </citation>
    <scope>NUCLEOTIDE SEQUENCE [GENOMIC DNA] OF 1-15</scope>
</reference>
<reference key="4">
    <citation type="journal article" date="1976" name="J. Mol. Biol.">
        <title>Bacteriophage T4 prehead proteinase. I. Purification and properties of a bacteriophage enzyme which cleaves the capsid precursor proteins.</title>
        <authorList>
            <person name="Showe M.K."/>
            <person name="Isobe E."/>
            <person name="Onorato L."/>
        </authorList>
    </citation>
    <scope>CATALYTIC ACTIVITY</scope>
    <scope>PROTEOLYTIC CLEAVAGE</scope>
    <scope>FUNCTION</scope>
    <scope>BIOPHYSICOCHEMICAL PROPERTIES</scope>
</reference>
<reference key="5">
    <citation type="journal article" date="1992" name="Virology">
        <title>Bacteriophage T4 gene 21 encodes two proteins essential for phage maturation.</title>
        <authorList>
            <person name="Hintermann E."/>
            <person name="Kuhn A."/>
        </authorList>
    </citation>
    <scope>ALTERNATIVE INITIATION (ISOFORMS LONG AND SHORT)</scope>
</reference>
<reference key="6">
    <citation type="journal article" date="2022" name="Viruses">
        <title>The Beauty of Bacteriophage T4 Research: Lindsay W. Black and the T4 Head Assembly.</title>
        <authorList>
            <person name="Kuhn A."/>
            <person name="Thomas J.A."/>
        </authorList>
    </citation>
    <scope>REVIEW</scope>
    <scope>FUNCTION</scope>
</reference>
<reference evidence="10" key="7">
    <citation type="journal article" date="2016" name="Structure">
        <title>Common Evolutionary Origin of Procapsid Proteases, Phage Tail Tubes, and Tubes of Bacterial Type VI Secretion Systems.</title>
        <authorList>
            <person name="Fokine A."/>
            <person name="Rossmann M.G."/>
        </authorList>
    </citation>
    <scope>X-RAY CRYSTALLOGRAPHY (1.94 ANGSTROMS)</scope>
    <scope>FUNCTION</scope>
    <scope>SUBUNIT</scope>
    <scope>ACTIVE SITE</scope>
    <scope>MUTAGENESIS OF HIS-85 AND SER-140</scope>
    <scope>PROTEOLYTIC CLEAVAGE</scope>
</reference>
<evidence type="ECO:0000269" key="1">
    <source>
    </source>
</evidence>
<evidence type="ECO:0000269" key="2">
    <source>
    </source>
</evidence>
<evidence type="ECO:0000269" key="3">
    <source>
    </source>
</evidence>
<evidence type="ECO:0000303" key="4">
    <source>
    </source>
</evidence>
<evidence type="ECO:0000303" key="5">
    <source>
    </source>
</evidence>
<evidence type="ECO:0000303" key="6">
    <source>
    </source>
</evidence>
<evidence type="ECO:0000305" key="7"/>
<evidence type="ECO:0000305" key="8">
    <source>
    </source>
</evidence>
<evidence type="ECO:0000305" key="9">
    <source>
    </source>
</evidence>
<evidence type="ECO:0007744" key="10">
    <source>
        <dbReference type="PDB" id="5JBL"/>
    </source>
</evidence>
<evidence type="ECO:0007829" key="11">
    <source>
        <dbReference type="PDB" id="5JBL"/>
    </source>
</evidence>
<accession>P06807</accession>
<accession>Q38427</accession>
<accession>Q9T0U1</accession>
<comment type="function">
    <text evidence="1 5 6 9">Serine protease ot the inner core, which is activated by autocatalytic cleavage after completion of prohead assembly and processes many prohead proteins (PubMed:12371). These cleaved peptides from the inner core and the auto-cleaved protease escape from the capsid, thus liberating space for the phage DNA genome (Probable). Cleaves the prohead proteins after the sequence motif L/I-X-E (PubMed:27667692, PubMed:35458430).</text>
</comment>
<comment type="biophysicochemical properties">
    <phDependence>
        <text evidence="1">Optimum pH is 8.5.</text>
    </phDependence>
</comment>
<comment type="subunit">
    <text evidence="3">Homopentamer.</text>
</comment>
<comment type="alternative products">
    <event type="alternative initiation"/>
    <isoform>
        <id>P06807-1</id>
        <name>long</name>
        <sequence type="displayed"/>
    </isoform>
    <isoform>
        <id>P06807-2</id>
        <name>short</name>
        <sequence type="described" ref="VSP_062380"/>
    </isoform>
    <text evidence="2">Both the long and the short isoform seem to be important for phage development.</text>
</comment>
<comment type="domain">
    <text evidence="3">The N-terminus blocks the catalytic center.</text>
</comment>
<comment type="PTM">
    <text evidence="5 8">The self-cleavage of the N-terminus allows the activation of the protease (Probable) (PubMed:27667692). Probably also self-cleaved at the C-terminus in order to detach the protease from the scaffold protein and allow it to diffuse within the prohead to cleave the prohead proteins (PubMed:27667692). After cleavage of the inner core of the prohead, the gp21 protease also destroys itself into small cleavage products (PubMed:27667692).</text>
</comment>
<comment type="similarity">
    <text evidence="7">Belongs to the peptidase U9 family.</text>
</comment>
<sequence length="212" mass="23251">MNEPQLLIETWGQPGEIIDGVPMLESHDGKDLGLKPGLYIEGIFMQAEVVNRNKRLYPKRILEKAVKDYINEQVLTKQALGELNHPPRANVDPMQAAIIIEDMWWKGNDVYGRARVIEGDHGPGDKLAANIRAGWIPGVSSRGLGSLTDTNEGYRIVNEGFKLTVGVDAVWGPSAPDAWVTPKEITESQTAEADTSADDAYMALAEAMKKAL</sequence>
<protein>
    <recommendedName>
        <fullName>Prohead core protein protease</fullName>
        <ecNumber evidence="1">3.4.21.-</ecNumber>
    </recommendedName>
    <alternativeName>
        <fullName>Protein Gp21</fullName>
    </alternativeName>
    <alternativeName>
        <fullName evidence="4">T4PPase</fullName>
    </alternativeName>
</protein>
<organism>
    <name type="scientific">Enterobacteria phage T4</name>
    <name type="common">Bacteriophage T4</name>
    <dbReference type="NCBI Taxonomy" id="10665"/>
    <lineage>
        <taxon>Viruses</taxon>
        <taxon>Duplodnaviria</taxon>
        <taxon>Heunggongvirae</taxon>
        <taxon>Uroviricota</taxon>
        <taxon>Caudoviricetes</taxon>
        <taxon>Straboviridae</taxon>
        <taxon>Tevenvirinae</taxon>
        <taxon>Tequatrovirus</taxon>
    </lineage>
</organism>
<gene>
    <name type="primary">21</name>
</gene>
<feature type="chain" id="PRO_0000079182" description="Prohead core protein protease">
    <location>
        <begin position="1"/>
        <end position="206"/>
    </location>
</feature>
<feature type="propeptide" id="PRO_0000224184">
    <location>
        <begin position="207"/>
        <end position="212"/>
    </location>
</feature>
<feature type="region of interest" description="Homomultimerization" evidence="3">
    <location>
        <begin position="117"/>
        <end position="136"/>
    </location>
</feature>
<feature type="active site" evidence="3">
    <location>
        <position position="85"/>
    </location>
</feature>
<feature type="active site" evidence="3">
    <location>
        <position position="140"/>
    </location>
</feature>
<feature type="site" description="Cleavage; by autolysis" evidence="9">
    <location>
        <begin position="9"/>
        <end position="10"/>
    </location>
</feature>
<feature type="site" description="Cleavage; by autolysis" evidence="9">
    <location>
        <begin position="206"/>
        <end position="207"/>
    </location>
</feature>
<feature type="splice variant" id="VSP_062380" description="In isoform short.">
    <location>
        <begin position="1"/>
        <end position="44"/>
    </location>
</feature>
<feature type="mutagenesis site" description="Complete loss of auto-cleavage;when associated with A-140." evidence="3">
    <original>H</original>
    <variation>A</variation>
    <location>
        <position position="85"/>
    </location>
</feature>
<feature type="mutagenesis site" description="Complete loss of auto-cleavage;when associated with A-85." evidence="3">
    <original>S</original>
    <variation>A</variation>
    <location>
        <position position="140"/>
    </location>
</feature>
<feature type="sequence conflict" description="In Ref. 3." evidence="7" ref="3">
    <original>Q</original>
    <variation>K</variation>
    <location>
        <position position="13"/>
    </location>
</feature>
<feature type="sequence conflict" description="In Ref. 1; AAA32501." evidence="7" ref="1">
    <original>E</original>
    <variation>K</variation>
    <location>
        <position position="152"/>
    </location>
</feature>
<feature type="strand" evidence="11">
    <location>
        <begin position="5"/>
        <end position="10"/>
    </location>
</feature>
<feature type="strand" evidence="11">
    <location>
        <begin position="15"/>
        <end position="19"/>
    </location>
</feature>
<feature type="strand" evidence="11">
    <location>
        <begin position="38"/>
        <end position="49"/>
    </location>
</feature>
<feature type="strand" evidence="11">
    <location>
        <begin position="54"/>
        <end position="56"/>
    </location>
</feature>
<feature type="helix" evidence="11">
    <location>
        <begin position="59"/>
        <end position="72"/>
    </location>
</feature>
<feature type="turn" evidence="11">
    <location>
        <begin position="73"/>
        <end position="77"/>
    </location>
</feature>
<feature type="strand" evidence="11">
    <location>
        <begin position="80"/>
        <end position="84"/>
    </location>
</feature>
<feature type="strand" evidence="11">
    <location>
        <begin position="87"/>
        <end position="90"/>
    </location>
</feature>
<feature type="helix" evidence="11">
    <location>
        <begin position="93"/>
        <end position="95"/>
    </location>
</feature>
<feature type="strand" evidence="11">
    <location>
        <begin position="96"/>
        <end position="106"/>
    </location>
</feature>
<feature type="strand" evidence="11">
    <location>
        <begin position="109"/>
        <end position="116"/>
    </location>
</feature>
<feature type="strand" evidence="11">
    <location>
        <begin position="119"/>
        <end position="122"/>
    </location>
</feature>
<feature type="helix" evidence="11">
    <location>
        <begin position="123"/>
        <end position="133"/>
    </location>
</feature>
<feature type="strand" evidence="11">
    <location>
        <begin position="138"/>
        <end position="145"/>
    </location>
</feature>
<feature type="strand" evidence="11">
    <location>
        <begin position="147"/>
        <end position="149"/>
    </location>
</feature>
<feature type="strand" evidence="11">
    <location>
        <begin position="151"/>
        <end position="153"/>
    </location>
</feature>
<feature type="strand" evidence="11">
    <location>
        <begin position="155"/>
        <end position="157"/>
    </location>
</feature>
<feature type="strand" evidence="11">
    <location>
        <begin position="162"/>
        <end position="170"/>
    </location>
</feature>
<name>PCPP_BPT4</name>